<evidence type="ECO:0000255" key="1">
    <source>
        <dbReference type="HAMAP-Rule" id="MF_01001"/>
    </source>
</evidence>
<accession>Q0TAS9</accession>
<gene>
    <name evidence="1" type="primary">wecG</name>
    <name evidence="1" type="synonym">rffM</name>
    <name type="ordered locus">ECP_3986</name>
</gene>
<organism>
    <name type="scientific">Escherichia coli O6:K15:H31 (strain 536 / UPEC)</name>
    <dbReference type="NCBI Taxonomy" id="362663"/>
    <lineage>
        <taxon>Bacteria</taxon>
        <taxon>Pseudomonadati</taxon>
        <taxon>Pseudomonadota</taxon>
        <taxon>Gammaproteobacteria</taxon>
        <taxon>Enterobacterales</taxon>
        <taxon>Enterobacteriaceae</taxon>
        <taxon>Escherichia</taxon>
    </lineage>
</organism>
<feature type="chain" id="PRO_1000062728" description="UDP-N-acetyl-D-mannosaminuronic acid transferase">
    <location>
        <begin position="1"/>
        <end position="246"/>
    </location>
</feature>
<name>WECG_ECOL5</name>
<reference key="1">
    <citation type="journal article" date="2006" name="Mol. Microbiol.">
        <title>Role of pathogenicity island-associated integrases in the genome plasticity of uropathogenic Escherichia coli strain 536.</title>
        <authorList>
            <person name="Hochhut B."/>
            <person name="Wilde C."/>
            <person name="Balling G."/>
            <person name="Middendorf B."/>
            <person name="Dobrindt U."/>
            <person name="Brzuszkiewicz E."/>
            <person name="Gottschalk G."/>
            <person name="Carniel E."/>
            <person name="Hacker J."/>
        </authorList>
    </citation>
    <scope>NUCLEOTIDE SEQUENCE [LARGE SCALE GENOMIC DNA]</scope>
    <source>
        <strain>536 / UPEC</strain>
    </source>
</reference>
<protein>
    <recommendedName>
        <fullName evidence="1">UDP-N-acetyl-D-mannosaminuronic acid transferase</fullName>
        <shortName evidence="1">UDP-ManNAcA transferase</shortName>
        <ecNumber evidence="1">2.4.1.180</ecNumber>
    </recommendedName>
</protein>
<comment type="function">
    <text evidence="1">Catalyzes the synthesis of Und-PP-GlcNAc-ManNAcA (Lipid II), the second lipid-linked intermediate involved in enterobacterial common antigen (ECA) synthesis.</text>
</comment>
<comment type="catalytic activity">
    <reaction evidence="1">
        <text>UDP-N-acetyl-alpha-D-mannosaminouronate + N-acetyl-alpha-D-glucosaminyl-di-trans,octa-cis-undecaprenyl diphosphate = beta-D-ManNAcA-(1-&gt;4)-alpha-D-GlcNAc-di-trans,octa-cis-undecaprenyl diphosphate + UDP + H(+)</text>
        <dbReference type="Rhea" id="RHEA:28366"/>
        <dbReference type="ChEBI" id="CHEBI:15378"/>
        <dbReference type="ChEBI" id="CHEBI:58223"/>
        <dbReference type="ChEBI" id="CHEBI:61495"/>
        <dbReference type="ChEBI" id="CHEBI:62959"/>
        <dbReference type="ChEBI" id="CHEBI:70731"/>
        <dbReference type="EC" id="2.4.1.180"/>
    </reaction>
</comment>
<comment type="pathway">
    <text evidence="1">Bacterial outer membrane biogenesis; enterobacterial common antigen biosynthesis.</text>
</comment>
<comment type="similarity">
    <text evidence="1">Belongs to the glycosyltransferase 26 family.</text>
</comment>
<proteinExistence type="inferred from homology"/>
<keyword id="KW-0328">Glycosyltransferase</keyword>
<keyword id="KW-0808">Transferase</keyword>
<dbReference type="EC" id="2.4.1.180" evidence="1"/>
<dbReference type="EMBL" id="CP000247">
    <property type="protein sequence ID" value="ABG71950.1"/>
    <property type="molecule type" value="Genomic_DNA"/>
</dbReference>
<dbReference type="RefSeq" id="WP_001064038.1">
    <property type="nucleotide sequence ID" value="NC_008253.1"/>
</dbReference>
<dbReference type="SMR" id="Q0TAS9"/>
<dbReference type="CAZy" id="GT26">
    <property type="family name" value="Glycosyltransferase Family 26"/>
</dbReference>
<dbReference type="GeneID" id="93778149"/>
<dbReference type="KEGG" id="ecp:ECP_3986"/>
<dbReference type="HOGENOM" id="CLU_063203_3_2_6"/>
<dbReference type="UniPathway" id="UPA00566"/>
<dbReference type="Proteomes" id="UP000009182">
    <property type="component" value="Chromosome"/>
</dbReference>
<dbReference type="GO" id="GO:0047241">
    <property type="term" value="F:lipopolysaccharide N-acetylmannosaminouronosyltransferase activity"/>
    <property type="evidence" value="ECO:0007669"/>
    <property type="project" value="UniProtKB-UniRule"/>
</dbReference>
<dbReference type="GO" id="GO:0009246">
    <property type="term" value="P:enterobacterial common antigen biosynthetic process"/>
    <property type="evidence" value="ECO:0007669"/>
    <property type="project" value="UniProtKB-UniRule"/>
</dbReference>
<dbReference type="CDD" id="cd06533">
    <property type="entry name" value="Glyco_transf_WecG_TagA"/>
    <property type="match status" value="1"/>
</dbReference>
<dbReference type="HAMAP" id="MF_01001">
    <property type="entry name" value="WecG_RffM"/>
    <property type="match status" value="1"/>
</dbReference>
<dbReference type="InterPro" id="IPR023085">
    <property type="entry name" value="UDP-ManNAcA_Trfase_WecG"/>
</dbReference>
<dbReference type="InterPro" id="IPR004629">
    <property type="entry name" value="WecG_TagA_CpsF"/>
</dbReference>
<dbReference type="NCBIfam" id="NF002980">
    <property type="entry name" value="PRK03692.1"/>
    <property type="match status" value="1"/>
</dbReference>
<dbReference type="NCBIfam" id="TIGR00696">
    <property type="entry name" value="wecG_tagA_cpsF"/>
    <property type="match status" value="1"/>
</dbReference>
<dbReference type="PANTHER" id="PTHR34136">
    <property type="match status" value="1"/>
</dbReference>
<dbReference type="PANTHER" id="PTHR34136:SF1">
    <property type="entry name" value="UDP-N-ACETYL-D-MANNOSAMINURONIC ACID TRANSFERASE"/>
    <property type="match status" value="1"/>
</dbReference>
<dbReference type="Pfam" id="PF03808">
    <property type="entry name" value="Glyco_tran_WecG"/>
    <property type="match status" value="1"/>
</dbReference>
<sequence length="246" mass="27962">MNNNTTAPTYTLRGLQLIGWRDMQHALDYLFADGQLKQGTLVAINAEKMLTIEDNAEVRELINAAEFKYADGISVVRSVRKKYPQAQVSRVAGADLWEELMARAGKEGTPVFLVGGKPEVLAQTEAKLRNQWNVNIVGSQDGYFKPEQRQALFERIHASGAQIVTVAMGSPKQEIFMRDCRLVHPDALYMGVGGTYDVFTGHVKRAPKIWQTLGLEWLYRLLSQPSRIKRQLRLLRYLRWHYTGNL</sequence>